<reference key="1">
    <citation type="submission" date="2008-02" db="EMBL/GenBank/DDBJ databases">
        <title>Complete sequence of Yersinia pseudotuberculosis YPIII.</title>
        <authorList>
            <consortium name="US DOE Joint Genome Institute"/>
            <person name="Copeland A."/>
            <person name="Lucas S."/>
            <person name="Lapidus A."/>
            <person name="Glavina del Rio T."/>
            <person name="Dalin E."/>
            <person name="Tice H."/>
            <person name="Bruce D."/>
            <person name="Goodwin L."/>
            <person name="Pitluck S."/>
            <person name="Munk A.C."/>
            <person name="Brettin T."/>
            <person name="Detter J.C."/>
            <person name="Han C."/>
            <person name="Tapia R."/>
            <person name="Schmutz J."/>
            <person name="Larimer F."/>
            <person name="Land M."/>
            <person name="Hauser L."/>
            <person name="Challacombe J.F."/>
            <person name="Green L."/>
            <person name="Lindler L.E."/>
            <person name="Nikolich M.P."/>
            <person name="Richardson P."/>
        </authorList>
    </citation>
    <scope>NUCLEOTIDE SEQUENCE [LARGE SCALE GENOMIC DNA]</scope>
    <source>
        <strain>YPIII</strain>
    </source>
</reference>
<sequence>MSTEHKQSLSAVTLAAIGVVYGDIGTSPLYTLRECFSGHYGFDVRPDVVFGFLSLIFWMLILVVSVKYLTYVMRADNAGEGGILTLMSLAGRNTSSRATSILVVLGLIGGSFFYGEVVITPAISVMSAIEGLEIAAPALDPYIVPCSIAVLTLLFVIQKHGTGSVGKLFAPVMLVWFLTLALLGLRSIIANPEVLAALNPKWAISFFVEYKSVSFFALGAVVLAITGVEALYADMGHFGKFPIRLAWFTVVLPSLVLNYFGQGALLLKNPEAIKNPFFLLAPDWALIPLLILATLATVIASQAVISGVFSLTRQAVRLGYLPPMRIIHTSEMESGQIYIPVINWTLYLAVVLVIIGFERSSNLAAAYGIAVTGTMVITSILFCTVAWKNWHWNRFLVAFLLMVLLIIDIPMFSANVLKLFSGGWLPLSLGLVMFIIMTTWKSERFSLLRRMHEHSNSLEAMIASLEKSPPVRVPGTAVYMSRAMNVIPFALLHNLKHNKVLHERVVLLTMRTDDVPYVHNVERVTIEQLSPTFWRVVARYGWRETPNVAEIFHRCGLEGLSCQMMETSFFMSHESLILTKRPWHLFLRGKLFIALSRNALRAPDQFEIPPNRVIELGTQVEI</sequence>
<gene>
    <name evidence="1" type="primary">kup</name>
    <name type="ordered locus">YPK_4211</name>
</gene>
<organism>
    <name type="scientific">Yersinia pseudotuberculosis serotype O:3 (strain YPIII)</name>
    <dbReference type="NCBI Taxonomy" id="502800"/>
    <lineage>
        <taxon>Bacteria</taxon>
        <taxon>Pseudomonadati</taxon>
        <taxon>Pseudomonadota</taxon>
        <taxon>Gammaproteobacteria</taxon>
        <taxon>Enterobacterales</taxon>
        <taxon>Yersiniaceae</taxon>
        <taxon>Yersinia</taxon>
    </lineage>
</organism>
<protein>
    <recommendedName>
        <fullName evidence="1">Low affinity potassium transport system protein Kup</fullName>
    </recommendedName>
    <alternativeName>
        <fullName evidence="1">Kup system potassium uptake protein</fullName>
    </alternativeName>
</protein>
<comment type="function">
    <text evidence="1">Responsible for the low-affinity transport of potassium into the cell. Likely operates as a K(+):H(+) symporter.</text>
</comment>
<comment type="catalytic activity">
    <reaction evidence="1">
        <text>K(+)(in) + H(+)(in) = K(+)(out) + H(+)(out)</text>
        <dbReference type="Rhea" id="RHEA:28490"/>
        <dbReference type="ChEBI" id="CHEBI:15378"/>
        <dbReference type="ChEBI" id="CHEBI:29103"/>
    </reaction>
    <physiologicalReaction direction="right-to-left" evidence="1">
        <dbReference type="Rhea" id="RHEA:28492"/>
    </physiologicalReaction>
</comment>
<comment type="subcellular location">
    <subcellularLocation>
        <location evidence="1">Cell inner membrane</location>
        <topology evidence="1">Multi-pass membrane protein</topology>
    </subcellularLocation>
</comment>
<comment type="similarity">
    <text evidence="1">Belongs to the HAK/KUP transporter (TC 2.A.72) family.</text>
</comment>
<dbReference type="EMBL" id="CP000950">
    <property type="protein sequence ID" value="ACA70467.1"/>
    <property type="molecule type" value="Genomic_DNA"/>
</dbReference>
<dbReference type="RefSeq" id="WP_011191440.1">
    <property type="nucleotide sequence ID" value="NZ_CP009792.1"/>
</dbReference>
<dbReference type="GeneID" id="49788031"/>
<dbReference type="KEGG" id="ypy:YPK_4211"/>
<dbReference type="PATRIC" id="fig|502800.11.peg.561"/>
<dbReference type="GO" id="GO:0005886">
    <property type="term" value="C:plasma membrane"/>
    <property type="evidence" value="ECO:0007669"/>
    <property type="project" value="UniProtKB-SubCell"/>
</dbReference>
<dbReference type="GO" id="GO:0015079">
    <property type="term" value="F:potassium ion transmembrane transporter activity"/>
    <property type="evidence" value="ECO:0007669"/>
    <property type="project" value="UniProtKB-UniRule"/>
</dbReference>
<dbReference type="GO" id="GO:0015293">
    <property type="term" value="F:symporter activity"/>
    <property type="evidence" value="ECO:0007669"/>
    <property type="project" value="UniProtKB-UniRule"/>
</dbReference>
<dbReference type="HAMAP" id="MF_01522">
    <property type="entry name" value="Kup"/>
    <property type="match status" value="1"/>
</dbReference>
<dbReference type="InterPro" id="IPR003855">
    <property type="entry name" value="K+_transporter"/>
</dbReference>
<dbReference type="InterPro" id="IPR053952">
    <property type="entry name" value="K_trans_C"/>
</dbReference>
<dbReference type="InterPro" id="IPR053951">
    <property type="entry name" value="K_trans_N"/>
</dbReference>
<dbReference type="InterPro" id="IPR023051">
    <property type="entry name" value="Kup"/>
</dbReference>
<dbReference type="NCBIfam" id="TIGR00794">
    <property type="entry name" value="kup"/>
    <property type="match status" value="1"/>
</dbReference>
<dbReference type="NCBIfam" id="NF008015">
    <property type="entry name" value="PRK10745.1"/>
    <property type="match status" value="1"/>
</dbReference>
<dbReference type="PANTHER" id="PTHR30540:SF79">
    <property type="entry name" value="LOW AFFINITY POTASSIUM TRANSPORT SYSTEM PROTEIN KUP"/>
    <property type="match status" value="1"/>
</dbReference>
<dbReference type="PANTHER" id="PTHR30540">
    <property type="entry name" value="OSMOTIC STRESS POTASSIUM TRANSPORTER"/>
    <property type="match status" value="1"/>
</dbReference>
<dbReference type="Pfam" id="PF02705">
    <property type="entry name" value="K_trans"/>
    <property type="match status" value="1"/>
</dbReference>
<dbReference type="Pfam" id="PF22776">
    <property type="entry name" value="K_trans_C"/>
    <property type="match status" value="1"/>
</dbReference>
<name>KUP_YERPY</name>
<keyword id="KW-0997">Cell inner membrane</keyword>
<keyword id="KW-1003">Cell membrane</keyword>
<keyword id="KW-0406">Ion transport</keyword>
<keyword id="KW-0472">Membrane</keyword>
<keyword id="KW-0630">Potassium</keyword>
<keyword id="KW-0633">Potassium transport</keyword>
<keyword id="KW-0769">Symport</keyword>
<keyword id="KW-0812">Transmembrane</keyword>
<keyword id="KW-1133">Transmembrane helix</keyword>
<keyword id="KW-0813">Transport</keyword>
<evidence type="ECO:0000255" key="1">
    <source>
        <dbReference type="HAMAP-Rule" id="MF_01522"/>
    </source>
</evidence>
<accession>B1JR26</accession>
<proteinExistence type="inferred from homology"/>
<feature type="chain" id="PRO_1000146357" description="Low affinity potassium transport system protein Kup">
    <location>
        <begin position="1"/>
        <end position="622"/>
    </location>
</feature>
<feature type="transmembrane region" description="Helical" evidence="1">
    <location>
        <begin position="9"/>
        <end position="29"/>
    </location>
</feature>
<feature type="transmembrane region" description="Helical" evidence="1">
    <location>
        <begin position="46"/>
        <end position="66"/>
    </location>
</feature>
<feature type="transmembrane region" description="Helical" evidence="1">
    <location>
        <begin position="101"/>
        <end position="121"/>
    </location>
</feature>
<feature type="transmembrane region" description="Helical" evidence="1">
    <location>
        <begin position="137"/>
        <end position="157"/>
    </location>
</feature>
<feature type="transmembrane region" description="Helical" evidence="1">
    <location>
        <begin position="165"/>
        <end position="185"/>
    </location>
</feature>
<feature type="transmembrane region" description="Helical" evidence="1">
    <location>
        <begin position="213"/>
        <end position="233"/>
    </location>
</feature>
<feature type="transmembrane region" description="Helical" evidence="1">
    <location>
        <begin position="247"/>
        <end position="267"/>
    </location>
</feature>
<feature type="transmembrane region" description="Helical" evidence="1">
    <location>
        <begin position="276"/>
        <end position="296"/>
    </location>
</feature>
<feature type="transmembrane region" description="Helical" evidence="1">
    <location>
        <begin position="337"/>
        <end position="357"/>
    </location>
</feature>
<feature type="transmembrane region" description="Helical" evidence="1">
    <location>
        <begin position="363"/>
        <end position="383"/>
    </location>
</feature>
<feature type="transmembrane region" description="Helical" evidence="1">
    <location>
        <begin position="395"/>
        <end position="415"/>
    </location>
</feature>
<feature type="transmembrane region" description="Helical" evidence="1">
    <location>
        <begin position="416"/>
        <end position="436"/>
    </location>
</feature>